<gene>
    <name evidence="1" type="primary">lpxB</name>
    <name type="ordered locus">FTH_0542</name>
</gene>
<keyword id="KW-0328">Glycosyltransferase</keyword>
<keyword id="KW-0441">Lipid A biosynthesis</keyword>
<keyword id="KW-0444">Lipid biosynthesis</keyword>
<keyword id="KW-0443">Lipid metabolism</keyword>
<keyword id="KW-0808">Transferase</keyword>
<organism>
    <name type="scientific">Francisella tularensis subsp. holarctica (strain OSU18)</name>
    <dbReference type="NCBI Taxonomy" id="393011"/>
    <lineage>
        <taxon>Bacteria</taxon>
        <taxon>Pseudomonadati</taxon>
        <taxon>Pseudomonadota</taxon>
        <taxon>Gammaproteobacteria</taxon>
        <taxon>Thiotrichales</taxon>
        <taxon>Francisellaceae</taxon>
        <taxon>Francisella</taxon>
    </lineage>
</organism>
<dbReference type="EC" id="2.4.1.182" evidence="1"/>
<dbReference type="EMBL" id="CP000437">
    <property type="protein sequence ID" value="ABI82515.1"/>
    <property type="molecule type" value="Genomic_DNA"/>
</dbReference>
<dbReference type="RefSeq" id="WP_003014884.1">
    <property type="nucleotide sequence ID" value="NC_017463.1"/>
</dbReference>
<dbReference type="SMR" id="Q0BN19"/>
<dbReference type="CAZy" id="GT19">
    <property type="family name" value="Glycosyltransferase Family 19"/>
</dbReference>
<dbReference type="KEGG" id="fth:FTH_0542"/>
<dbReference type="UniPathway" id="UPA00973"/>
<dbReference type="GO" id="GO:0016020">
    <property type="term" value="C:membrane"/>
    <property type="evidence" value="ECO:0007669"/>
    <property type="project" value="GOC"/>
</dbReference>
<dbReference type="GO" id="GO:0008915">
    <property type="term" value="F:lipid-A-disaccharide synthase activity"/>
    <property type="evidence" value="ECO:0007669"/>
    <property type="project" value="UniProtKB-UniRule"/>
</dbReference>
<dbReference type="GO" id="GO:0005543">
    <property type="term" value="F:phospholipid binding"/>
    <property type="evidence" value="ECO:0007669"/>
    <property type="project" value="TreeGrafter"/>
</dbReference>
<dbReference type="GO" id="GO:0009245">
    <property type="term" value="P:lipid A biosynthetic process"/>
    <property type="evidence" value="ECO:0007669"/>
    <property type="project" value="UniProtKB-UniRule"/>
</dbReference>
<dbReference type="CDD" id="cd01635">
    <property type="entry name" value="Glycosyltransferase_GTB-type"/>
    <property type="match status" value="1"/>
</dbReference>
<dbReference type="Gene3D" id="3.40.50.2000">
    <property type="entry name" value="Glycogen Phosphorylase B"/>
    <property type="match status" value="2"/>
</dbReference>
<dbReference type="HAMAP" id="MF_00392">
    <property type="entry name" value="LpxB"/>
    <property type="match status" value="1"/>
</dbReference>
<dbReference type="InterPro" id="IPR003835">
    <property type="entry name" value="Glyco_trans_19"/>
</dbReference>
<dbReference type="NCBIfam" id="TIGR00215">
    <property type="entry name" value="lpxB"/>
    <property type="match status" value="1"/>
</dbReference>
<dbReference type="PANTHER" id="PTHR30372">
    <property type="entry name" value="LIPID-A-DISACCHARIDE SYNTHASE"/>
    <property type="match status" value="1"/>
</dbReference>
<dbReference type="PANTHER" id="PTHR30372:SF4">
    <property type="entry name" value="LIPID-A-DISACCHARIDE SYNTHASE, MITOCHONDRIAL-RELATED"/>
    <property type="match status" value="1"/>
</dbReference>
<dbReference type="Pfam" id="PF02684">
    <property type="entry name" value="LpxB"/>
    <property type="match status" value="1"/>
</dbReference>
<dbReference type="SUPFAM" id="SSF53756">
    <property type="entry name" value="UDP-Glycosyltransferase/glycogen phosphorylase"/>
    <property type="match status" value="1"/>
</dbReference>
<feature type="chain" id="PRO_1000049398" description="Lipid-A-disaccharide synthase">
    <location>
        <begin position="1"/>
        <end position="380"/>
    </location>
</feature>
<proteinExistence type="inferred from homology"/>
<reference key="1">
    <citation type="journal article" date="2006" name="J. Bacteriol.">
        <title>Chromosome rearrangement and diversification of Francisella tularensis revealed by the type B (OSU18) genome sequence.</title>
        <authorList>
            <person name="Petrosino J.F."/>
            <person name="Xiang Q."/>
            <person name="Karpathy S.E."/>
            <person name="Jiang H."/>
            <person name="Yerrapragada S."/>
            <person name="Liu Y."/>
            <person name="Gioia J."/>
            <person name="Hemphill L."/>
            <person name="Gonzalez A."/>
            <person name="Raghavan T.M."/>
            <person name="Uzman A."/>
            <person name="Fox G.E."/>
            <person name="Highlander S."/>
            <person name="Reichard M."/>
            <person name="Morton R.J."/>
            <person name="Clinkenbeard K.D."/>
            <person name="Weinstock G.M."/>
        </authorList>
    </citation>
    <scope>NUCLEOTIDE SEQUENCE [LARGE SCALE GENOMIC DNA]</scope>
    <source>
        <strain>OSU18</strain>
    </source>
</reference>
<comment type="function">
    <text evidence="1">Condensation of UDP-2,3-diacylglucosamine and 2,3-diacylglucosamine-1-phosphate to form lipid A disaccharide, a precursor of lipid A, a phosphorylated glycolipid that anchors the lipopolysaccharide to the outer membrane of the cell.</text>
</comment>
<comment type="catalytic activity">
    <reaction evidence="1">
        <text>a lipid X + a UDP-2-N,3-O-bis[(3R)-3-hydroxyacyl]-alpha-D-glucosamine = a lipid A disaccharide + UDP + H(+)</text>
        <dbReference type="Rhea" id="RHEA:67828"/>
        <dbReference type="ChEBI" id="CHEBI:15378"/>
        <dbReference type="ChEBI" id="CHEBI:58223"/>
        <dbReference type="ChEBI" id="CHEBI:137748"/>
        <dbReference type="ChEBI" id="CHEBI:176338"/>
        <dbReference type="ChEBI" id="CHEBI:176343"/>
        <dbReference type="EC" id="2.4.1.182"/>
    </reaction>
</comment>
<comment type="pathway">
    <text evidence="1">Bacterial outer membrane biogenesis; LPS lipid A biosynthesis.</text>
</comment>
<comment type="similarity">
    <text evidence="1">Belongs to the LpxB family.</text>
</comment>
<evidence type="ECO:0000255" key="1">
    <source>
        <dbReference type="HAMAP-Rule" id="MF_00392"/>
    </source>
</evidence>
<sequence>MRIGIVAGELSGDQLGGTLVEALKQKYPNAIIEGIGGPKMAAAGFKSLYPMDALSLIGFLEIISKGLRILSIRRKIINYFKQNKPDIFIGIDAPDFNLTVEKELRSAGIKTIHYVSPKIWVWREYRIKKIRKATDKILAILPFETEYYKNRHKFEAIYVGHPLAKNIPIHIDRAKYRDKLGLKGSSLPILSVLPGSRTTEVSRLLPLFLLALQKLVDAGYKFKAIMPLAKPSLKPLFAKYKEQIDSLGIEVFETNSHDVLKASDLSLLASGTATLEAMLCKLPMVVGYKLSWLSALIGRMLIGNHSYWAFPNILHKNEIIKELIQEDCTVDNLFSELKRLFDDKRRNDYIVEEFEKIHKEMVIDTESKIIQVLDTMIEKS</sequence>
<protein>
    <recommendedName>
        <fullName evidence="1">Lipid-A-disaccharide synthase</fullName>
        <ecNumber evidence="1">2.4.1.182</ecNumber>
    </recommendedName>
</protein>
<accession>Q0BN19</accession>
<name>LPXB_FRATO</name>